<proteinExistence type="inferred from homology"/>
<name>TRPC_CHLTE</name>
<sequence>MTYLTRILETKAREVAELKKLKPERRYREACGDLPATRDFRSAITSRDGGINLIAEVKKASPSRGVLVEDFRPLDIAARYAELGASAFSVLTDSHYFQGSPDYLKAITQQFSIPVLRKEFIIDESQIYETRLMGADAALLIVAALEPSQLRDYLQLFAELGLHALVEVHDRRELDIAIEQGSTIVGVNNRDLRDFTVDLMTSVNLKREYPEGVLSVAESGLKRRDDVLLMQDAGFDAVLIGEGLLASEELRQFSWG</sequence>
<accession>Q8KBW1</accession>
<reference key="1">
    <citation type="journal article" date="2002" name="Proc. Natl. Acad. Sci. U.S.A.">
        <title>The complete genome sequence of Chlorobium tepidum TLS, a photosynthetic, anaerobic, green-sulfur bacterium.</title>
        <authorList>
            <person name="Eisen J.A."/>
            <person name="Nelson K.E."/>
            <person name="Paulsen I.T."/>
            <person name="Heidelberg J.F."/>
            <person name="Wu M."/>
            <person name="Dodson R.J."/>
            <person name="DeBoy R.T."/>
            <person name="Gwinn M.L."/>
            <person name="Nelson W.C."/>
            <person name="Haft D.H."/>
            <person name="Hickey E.K."/>
            <person name="Peterson J.D."/>
            <person name="Durkin A.S."/>
            <person name="Kolonay J.F."/>
            <person name="Yang F."/>
            <person name="Holt I.E."/>
            <person name="Umayam L.A."/>
            <person name="Mason T.M."/>
            <person name="Brenner M."/>
            <person name="Shea T.P."/>
            <person name="Parksey D.S."/>
            <person name="Nierman W.C."/>
            <person name="Feldblyum T.V."/>
            <person name="Hansen C.L."/>
            <person name="Craven M.B."/>
            <person name="Radune D."/>
            <person name="Vamathevan J.J."/>
            <person name="Khouri H.M."/>
            <person name="White O."/>
            <person name="Gruber T.M."/>
            <person name="Ketchum K.A."/>
            <person name="Venter J.C."/>
            <person name="Tettelin H."/>
            <person name="Bryant D.A."/>
            <person name="Fraser C.M."/>
        </authorList>
    </citation>
    <scope>NUCLEOTIDE SEQUENCE [LARGE SCALE GENOMIC DNA]</scope>
    <source>
        <strain>ATCC 49652 / DSM 12025 / NBRC 103806 / TLS</strain>
    </source>
</reference>
<protein>
    <recommendedName>
        <fullName evidence="1">Indole-3-glycerol phosphate synthase</fullName>
        <shortName evidence="1">IGPS</shortName>
        <ecNumber evidence="1">4.1.1.48</ecNumber>
    </recommendedName>
</protein>
<comment type="catalytic activity">
    <reaction evidence="1">
        <text>1-(2-carboxyphenylamino)-1-deoxy-D-ribulose 5-phosphate + H(+) = (1S,2R)-1-C-(indol-3-yl)glycerol 3-phosphate + CO2 + H2O</text>
        <dbReference type="Rhea" id="RHEA:23476"/>
        <dbReference type="ChEBI" id="CHEBI:15377"/>
        <dbReference type="ChEBI" id="CHEBI:15378"/>
        <dbReference type="ChEBI" id="CHEBI:16526"/>
        <dbReference type="ChEBI" id="CHEBI:58613"/>
        <dbReference type="ChEBI" id="CHEBI:58866"/>
        <dbReference type="EC" id="4.1.1.48"/>
    </reaction>
</comment>
<comment type="pathway">
    <text evidence="1">Amino-acid biosynthesis; L-tryptophan biosynthesis; L-tryptophan from chorismate: step 4/5.</text>
</comment>
<comment type="similarity">
    <text evidence="1">Belongs to the TrpC family.</text>
</comment>
<keyword id="KW-0028">Amino-acid biosynthesis</keyword>
<keyword id="KW-0057">Aromatic amino acid biosynthesis</keyword>
<keyword id="KW-0210">Decarboxylase</keyword>
<keyword id="KW-0456">Lyase</keyword>
<keyword id="KW-1185">Reference proteome</keyword>
<keyword id="KW-0822">Tryptophan biosynthesis</keyword>
<feature type="chain" id="PRO_0000154221" description="Indole-3-glycerol phosphate synthase">
    <location>
        <begin position="1"/>
        <end position="256"/>
    </location>
</feature>
<dbReference type="EC" id="4.1.1.48" evidence="1"/>
<dbReference type="EMBL" id="AE006470">
    <property type="protein sequence ID" value="AAM72896.1"/>
    <property type="molecule type" value="Genomic_DNA"/>
</dbReference>
<dbReference type="RefSeq" id="NP_662554.1">
    <property type="nucleotide sequence ID" value="NC_002932.3"/>
</dbReference>
<dbReference type="RefSeq" id="WP_010933335.1">
    <property type="nucleotide sequence ID" value="NC_002932.3"/>
</dbReference>
<dbReference type="SMR" id="Q8KBW1"/>
<dbReference type="STRING" id="194439.CT1671"/>
<dbReference type="EnsemblBacteria" id="AAM72896">
    <property type="protein sequence ID" value="AAM72896"/>
    <property type="gene ID" value="CT1671"/>
</dbReference>
<dbReference type="KEGG" id="cte:CT1671"/>
<dbReference type="PATRIC" id="fig|194439.7.peg.1509"/>
<dbReference type="eggNOG" id="COG0134">
    <property type="taxonomic scope" value="Bacteria"/>
</dbReference>
<dbReference type="HOGENOM" id="CLU_034247_2_0_10"/>
<dbReference type="OrthoDB" id="9804217at2"/>
<dbReference type="UniPathway" id="UPA00035">
    <property type="reaction ID" value="UER00043"/>
</dbReference>
<dbReference type="Proteomes" id="UP000001007">
    <property type="component" value="Chromosome"/>
</dbReference>
<dbReference type="GO" id="GO:0004425">
    <property type="term" value="F:indole-3-glycerol-phosphate synthase activity"/>
    <property type="evidence" value="ECO:0007669"/>
    <property type="project" value="UniProtKB-UniRule"/>
</dbReference>
<dbReference type="GO" id="GO:0004640">
    <property type="term" value="F:phosphoribosylanthranilate isomerase activity"/>
    <property type="evidence" value="ECO:0007669"/>
    <property type="project" value="TreeGrafter"/>
</dbReference>
<dbReference type="GO" id="GO:0000162">
    <property type="term" value="P:L-tryptophan biosynthetic process"/>
    <property type="evidence" value="ECO:0007669"/>
    <property type="project" value="UniProtKB-UniRule"/>
</dbReference>
<dbReference type="CDD" id="cd00331">
    <property type="entry name" value="IGPS"/>
    <property type="match status" value="1"/>
</dbReference>
<dbReference type="FunFam" id="3.20.20.70:FF:000024">
    <property type="entry name" value="Indole-3-glycerol phosphate synthase"/>
    <property type="match status" value="1"/>
</dbReference>
<dbReference type="Gene3D" id="3.20.20.70">
    <property type="entry name" value="Aldolase class I"/>
    <property type="match status" value="1"/>
</dbReference>
<dbReference type="HAMAP" id="MF_00134_B">
    <property type="entry name" value="IGPS_B"/>
    <property type="match status" value="1"/>
</dbReference>
<dbReference type="InterPro" id="IPR013785">
    <property type="entry name" value="Aldolase_TIM"/>
</dbReference>
<dbReference type="InterPro" id="IPR045186">
    <property type="entry name" value="Indole-3-glycerol_P_synth"/>
</dbReference>
<dbReference type="InterPro" id="IPR013798">
    <property type="entry name" value="Indole-3-glycerol_P_synth_dom"/>
</dbReference>
<dbReference type="InterPro" id="IPR001468">
    <property type="entry name" value="Indole-3-GlycerolPSynthase_CS"/>
</dbReference>
<dbReference type="InterPro" id="IPR011060">
    <property type="entry name" value="RibuloseP-bd_barrel"/>
</dbReference>
<dbReference type="NCBIfam" id="NF001377">
    <property type="entry name" value="PRK00278.2-4"/>
    <property type="match status" value="1"/>
</dbReference>
<dbReference type="PANTHER" id="PTHR22854:SF2">
    <property type="entry name" value="INDOLE-3-GLYCEROL-PHOSPHATE SYNTHASE"/>
    <property type="match status" value="1"/>
</dbReference>
<dbReference type="PANTHER" id="PTHR22854">
    <property type="entry name" value="TRYPTOPHAN BIOSYNTHESIS PROTEIN"/>
    <property type="match status" value="1"/>
</dbReference>
<dbReference type="Pfam" id="PF00218">
    <property type="entry name" value="IGPS"/>
    <property type="match status" value="1"/>
</dbReference>
<dbReference type="SUPFAM" id="SSF51366">
    <property type="entry name" value="Ribulose-phoshate binding barrel"/>
    <property type="match status" value="1"/>
</dbReference>
<dbReference type="PROSITE" id="PS00614">
    <property type="entry name" value="IGPS"/>
    <property type="match status" value="1"/>
</dbReference>
<gene>
    <name evidence="1" type="primary">trpC</name>
    <name type="ordered locus">CT1671</name>
</gene>
<evidence type="ECO:0000255" key="1">
    <source>
        <dbReference type="HAMAP-Rule" id="MF_00134"/>
    </source>
</evidence>
<organism>
    <name type="scientific">Chlorobaculum tepidum (strain ATCC 49652 / DSM 12025 / NBRC 103806 / TLS)</name>
    <name type="common">Chlorobium tepidum</name>
    <dbReference type="NCBI Taxonomy" id="194439"/>
    <lineage>
        <taxon>Bacteria</taxon>
        <taxon>Pseudomonadati</taxon>
        <taxon>Chlorobiota</taxon>
        <taxon>Chlorobiia</taxon>
        <taxon>Chlorobiales</taxon>
        <taxon>Chlorobiaceae</taxon>
        <taxon>Chlorobaculum</taxon>
    </lineage>
</organism>